<keyword id="KW-0175">Coiled coil</keyword>
<keyword id="KW-0968">Cytoplasmic vesicle</keyword>
<keyword id="KW-0344">Guanine-nucleotide releasing factor</keyword>
<keyword id="KW-0472">Membrane</keyword>
<keyword id="KW-0496">Mitochondrion</keyword>
<keyword id="KW-0597">Phosphoprotein</keyword>
<keyword id="KW-1185">Reference proteome</keyword>
<keyword id="KW-0729">SH3-binding</keyword>
<gene>
    <name type="primary">Sh3bp5</name>
    <name type="synonym">Sab</name>
    <name type="synonym">Vesp18</name>
</gene>
<reference key="1">
    <citation type="submission" date="1999-05" db="EMBL/GenBank/DDBJ databases">
        <title>Identification of VESP18, a vascular endothelial cell specific protein.</title>
        <authorList>
            <person name="Aoki T."/>
            <person name="Toyoda H."/>
            <person name="Nishimoto S."/>
            <person name="Tawara J."/>
            <person name="Komurasaki T."/>
        </authorList>
    </citation>
    <scope>NUCLEOTIDE SEQUENCE [MRNA]</scope>
    <source>
        <tissue>Liver</tissue>
    </source>
</reference>
<reference key="2">
    <citation type="journal article" date="2004" name="Biochem. Biophys. Res. Commun.">
        <title>Phosphorylation of the mitochondrial protein Sab by stress-activated protein kinase 3.</title>
        <authorList>
            <person name="Court N.W."/>
            <person name="Kuo I."/>
            <person name="Quigley O."/>
            <person name="Bogoyevitch M.A."/>
        </authorList>
    </citation>
    <scope>INTERACTION WITH MAPK9 AND MAPK12</scope>
    <scope>PHOSPHORYLATION AT SER-353 AND SER-423</scope>
    <scope>SUBCELLULAR LOCATION</scope>
    <scope>MUTAGENESIS OF SER-353 AND SER-423</scope>
</reference>
<reference key="3">
    <citation type="journal article" date="2012" name="Nat. Commun.">
        <title>Quantitative maps of protein phosphorylation sites across 14 different rat organs and tissues.</title>
        <authorList>
            <person name="Lundby A."/>
            <person name="Secher A."/>
            <person name="Lage K."/>
            <person name="Nordsborg N.B."/>
            <person name="Dmytriyev A."/>
            <person name="Lundby C."/>
            <person name="Olsen J.V."/>
        </authorList>
    </citation>
    <scope>PHOSPHORYLATION [LARGE SCALE ANALYSIS] AT SER-420 AND SER-423</scope>
    <scope>IDENTIFICATION BY MASS SPECTROMETRY [LARGE SCALE ANALYSIS]</scope>
</reference>
<protein>
    <recommendedName>
        <fullName>SH3 domain-binding protein 5</fullName>
        <shortName>SH3BP-5</shortName>
    </recommendedName>
    <alternativeName>
        <fullName>Vascular endothelial cell-specific protein 18</fullName>
    </alternativeName>
</protein>
<accession>Q91Y80</accession>
<organism>
    <name type="scientific">Rattus norvegicus</name>
    <name type="common">Rat</name>
    <dbReference type="NCBI Taxonomy" id="10116"/>
    <lineage>
        <taxon>Eukaryota</taxon>
        <taxon>Metazoa</taxon>
        <taxon>Chordata</taxon>
        <taxon>Craniata</taxon>
        <taxon>Vertebrata</taxon>
        <taxon>Euteleostomi</taxon>
        <taxon>Mammalia</taxon>
        <taxon>Eutheria</taxon>
        <taxon>Euarchontoglires</taxon>
        <taxon>Glires</taxon>
        <taxon>Rodentia</taxon>
        <taxon>Myomorpha</taxon>
        <taxon>Muroidea</taxon>
        <taxon>Muridae</taxon>
        <taxon>Murinae</taxon>
        <taxon>Rattus</taxon>
    </lineage>
</organism>
<name>3BP5_RAT</name>
<dbReference type="EMBL" id="AB027562">
    <property type="protein sequence ID" value="BAB47152.1"/>
    <property type="status" value="ALT_INIT"/>
    <property type="molecule type" value="mRNA"/>
</dbReference>
<dbReference type="RefSeq" id="NP_446463.2">
    <property type="nucleotide sequence ID" value="NM_054011.2"/>
</dbReference>
<dbReference type="SMR" id="Q91Y80"/>
<dbReference type="FunCoup" id="Q91Y80">
    <property type="interactions" value="353"/>
</dbReference>
<dbReference type="STRING" id="10116.ENSRNOP00000071111"/>
<dbReference type="GlyGen" id="Q91Y80">
    <property type="glycosylation" value="1 site"/>
</dbReference>
<dbReference type="iPTMnet" id="Q91Y80"/>
<dbReference type="PhosphoSitePlus" id="Q91Y80"/>
<dbReference type="PaxDb" id="10116-ENSRNOP00000026389"/>
<dbReference type="GeneID" id="117186"/>
<dbReference type="KEGG" id="rno:117186"/>
<dbReference type="UCSC" id="RGD:620220">
    <property type="organism name" value="rat"/>
</dbReference>
<dbReference type="AGR" id="RGD:620220"/>
<dbReference type="CTD" id="9467"/>
<dbReference type="RGD" id="620220">
    <property type="gene designation" value="Sh3bp5"/>
</dbReference>
<dbReference type="VEuPathDB" id="HostDB:ENSRNOG00000052391"/>
<dbReference type="eggNOG" id="KOG2008">
    <property type="taxonomic scope" value="Eukaryota"/>
</dbReference>
<dbReference type="HOGENOM" id="CLU_048895_1_0_1"/>
<dbReference type="InParanoid" id="Q91Y80"/>
<dbReference type="PhylomeDB" id="Q91Y80"/>
<dbReference type="TreeFam" id="TF105573"/>
<dbReference type="PRO" id="PR:Q91Y80"/>
<dbReference type="Proteomes" id="UP000002494">
    <property type="component" value="Chromosome 16"/>
</dbReference>
<dbReference type="Bgee" id="ENSRNOG00000052391">
    <property type="expression patterns" value="Expressed in heart and 20 other cell types or tissues"/>
</dbReference>
<dbReference type="GO" id="GO:0005737">
    <property type="term" value="C:cytoplasm"/>
    <property type="evidence" value="ECO:0000318"/>
    <property type="project" value="GO_Central"/>
</dbReference>
<dbReference type="GO" id="GO:0030659">
    <property type="term" value="C:cytoplasmic vesicle membrane"/>
    <property type="evidence" value="ECO:0000266"/>
    <property type="project" value="RGD"/>
</dbReference>
<dbReference type="GO" id="GO:0005739">
    <property type="term" value="C:mitochondrion"/>
    <property type="evidence" value="ECO:0000314"/>
    <property type="project" value="UniProtKB"/>
</dbReference>
<dbReference type="GO" id="GO:0005085">
    <property type="term" value="F:guanyl-nucleotide exchange factor activity"/>
    <property type="evidence" value="ECO:0000250"/>
    <property type="project" value="UniProtKB"/>
</dbReference>
<dbReference type="GO" id="GO:0004860">
    <property type="term" value="F:protein kinase inhibitor activity"/>
    <property type="evidence" value="ECO:0000266"/>
    <property type="project" value="RGD"/>
</dbReference>
<dbReference type="GO" id="GO:0017124">
    <property type="term" value="F:SH3 domain binding"/>
    <property type="evidence" value="ECO:0000304"/>
    <property type="project" value="RGD"/>
</dbReference>
<dbReference type="GO" id="GO:0035556">
    <property type="term" value="P:intracellular signal transduction"/>
    <property type="evidence" value="ECO:0000266"/>
    <property type="project" value="RGD"/>
</dbReference>
<dbReference type="GO" id="GO:0007254">
    <property type="term" value="P:JNK cascade"/>
    <property type="evidence" value="ECO:0000303"/>
    <property type="project" value="RGD"/>
</dbReference>
<dbReference type="InterPro" id="IPR007940">
    <property type="entry name" value="SH3BP5"/>
</dbReference>
<dbReference type="PANTHER" id="PTHR19423">
    <property type="entry name" value="SH3 DOMAIN-BINDING PROTEIN 5"/>
    <property type="match status" value="1"/>
</dbReference>
<dbReference type="PANTHER" id="PTHR19423:SF1">
    <property type="entry name" value="SH3 DOMAIN-BINDING PROTEIN 5"/>
    <property type="match status" value="1"/>
</dbReference>
<dbReference type="Pfam" id="PF05276">
    <property type="entry name" value="SH3BP5"/>
    <property type="match status" value="1"/>
</dbReference>
<evidence type="ECO:0000250" key="1">
    <source>
        <dbReference type="UniProtKB" id="O60239"/>
    </source>
</evidence>
<evidence type="ECO:0000250" key="2">
    <source>
        <dbReference type="UniProtKB" id="Q9Z131"/>
    </source>
</evidence>
<evidence type="ECO:0000256" key="3">
    <source>
        <dbReference type="SAM" id="MobiDB-lite"/>
    </source>
</evidence>
<evidence type="ECO:0000269" key="4">
    <source>
    </source>
</evidence>
<evidence type="ECO:0000305" key="5"/>
<evidence type="ECO:0007744" key="6">
    <source>
    </source>
</evidence>
<proteinExistence type="evidence at protein level"/>
<comment type="function">
    <text evidence="1">Functions as a guanine nucleotide exchange factor (GEF) with specificity for RAB11A and RAB25. Inhibits the auto- and transphosphorylation activity of BTK. Plays a negative regulatory role in BTK-related cytoplasmic signaling in B-cells. May be involved in BCR-induced apoptotic cell death.</text>
</comment>
<comment type="subunit">
    <text evidence="2 4">Interacts with BTK (PubMed:15158451). Interacts with all isoforms of MAPK8, MAPK9, MAPK10 and MAPK12 (PubMed:15158451). Interacts with GDP-bound and nucleotide-free forms of RAB11A (By similarity).</text>
</comment>
<comment type="subcellular location">
    <subcellularLocation>
        <location evidence="1">Cytoplasmic vesicle membrane</location>
        <topology evidence="1">Peripheral membrane protein</topology>
    </subcellularLocation>
    <subcellularLocation>
        <location evidence="4">Mitochondrion</location>
    </subcellularLocation>
    <text evidence="1">Colocalizes with RAB11A on cytoplasmic vesicle membranes.</text>
</comment>
<comment type="domain">
    <text evidence="1">The N-terminal half of the protein mediates interaction with RAB11A and functions as a guanine nucleotide exchange factor. Four long alpha-helices (interrupted by a central kink) assemble into coiled coils, giving rise to a 'V' shape.</text>
</comment>
<comment type="similarity">
    <text evidence="5">Belongs to the SH3BP5 family.</text>
</comment>
<comment type="sequence caution" evidence="5">
    <conflict type="erroneous initiation">
        <sequence resource="EMBL-CDS" id="BAB47152"/>
    </conflict>
</comment>
<feature type="chain" id="PRO_0000064370" description="SH3 domain-binding protein 5">
    <location>
        <begin position="1"/>
        <end position="457"/>
    </location>
</feature>
<feature type="region of interest" description="Disordered" evidence="3">
    <location>
        <begin position="1"/>
        <end position="68"/>
    </location>
</feature>
<feature type="region of interest" description="Sufficient for interaction with RAB11A and for guanine nucleotide exchange activity" evidence="1">
    <location>
        <begin position="33"/>
        <end position="267"/>
    </location>
</feature>
<feature type="region of interest" description="Disordered" evidence="3">
    <location>
        <begin position="308"/>
        <end position="347"/>
    </location>
</feature>
<feature type="region of interest" description="Disordered" evidence="3">
    <location>
        <begin position="371"/>
        <end position="427"/>
    </location>
</feature>
<feature type="coiled-coil region" evidence="1">
    <location>
        <begin position="46"/>
        <end position="92"/>
    </location>
</feature>
<feature type="coiled-coil region" evidence="1">
    <location>
        <begin position="99"/>
        <end position="147"/>
    </location>
</feature>
<feature type="coiled-coil region" evidence="1">
    <location>
        <begin position="156"/>
        <end position="202"/>
    </location>
</feature>
<feature type="coiled-coil region" evidence="1">
    <location>
        <begin position="213"/>
        <end position="257"/>
    </location>
</feature>
<feature type="compositionally biased region" description="Basic and acidic residues" evidence="3">
    <location>
        <begin position="1"/>
        <end position="12"/>
    </location>
</feature>
<feature type="compositionally biased region" description="Acidic residues" evidence="3">
    <location>
        <begin position="25"/>
        <end position="43"/>
    </location>
</feature>
<feature type="compositionally biased region" description="Basic and acidic residues" evidence="3">
    <location>
        <begin position="44"/>
        <end position="53"/>
    </location>
</feature>
<feature type="compositionally biased region" description="Acidic residues" evidence="3">
    <location>
        <begin position="308"/>
        <end position="319"/>
    </location>
</feature>
<feature type="compositionally biased region" description="Low complexity" evidence="3">
    <location>
        <begin position="322"/>
        <end position="334"/>
    </location>
</feature>
<feature type="compositionally biased region" description="Basic and acidic residues" evidence="3">
    <location>
        <begin position="382"/>
        <end position="398"/>
    </location>
</feature>
<feature type="compositionally biased region" description="Low complexity" evidence="3">
    <location>
        <begin position="406"/>
        <end position="427"/>
    </location>
</feature>
<feature type="modified residue" description="Phosphoserine; by MAPK12 and MAPK9" evidence="4">
    <location>
        <position position="353"/>
    </location>
</feature>
<feature type="modified residue" description="Phosphoserine" evidence="2">
    <location>
        <position position="377"/>
    </location>
</feature>
<feature type="modified residue" description="Phosphoserine" evidence="2">
    <location>
        <position position="378"/>
    </location>
</feature>
<feature type="modified residue" description="Phosphoserine" evidence="6">
    <location>
        <position position="420"/>
    </location>
</feature>
<feature type="modified residue" description="Phosphoserine; by MAPK12" evidence="4 6">
    <location>
        <position position="423"/>
    </location>
</feature>
<feature type="mutagenesis site" description="Large decrease in phosphorylation by SAPK3." evidence="4">
    <original>S</original>
    <variation>A</variation>
    <location>
        <position position="353"/>
    </location>
</feature>
<feature type="mutagenesis site" description="Slight decrease in phosphorylation by SAPK3." evidence="4">
    <original>S</original>
    <variation>A</variation>
    <location>
        <position position="423"/>
    </location>
</feature>
<sequence length="457" mass="50829">MDTALKRSRSEEPVELPPPAREAEEKEEEEERMEQGLEEEEEVDPRIQGELEKLNQSTDDINRRETELEDARQKFRSVLVEATVKLDELAKKIGKAVEDSKPYWEARRVARQAQLEAQKATQDFQRATEVLRAAKETISLAEQRLLEDDKRQFDSAWQEMLNHATQRVMEAEQTKTRSELVHKETAARYNAAMGRMRQLEKKLKRAINKSKPYFELKAKYYVQLEQLKKTVDDLQAKLALAKGEYKAALKSLERISDEIHERRRSNAMGPRGCGVGAEGSITSVENLPASKPEPDAISVASEAFEDDNCGNLVSEDDSETQSVSSFSSGPTSPSEMPDQFPAVARPGSLDLPSPVSLSEFGMMFPILGPRSECSGASSPECEVERGDRAEGAENKMSDKANNNRVLSSTSAGGGRSRSQSSTSLEGQALETRMKQLSLQCSKGREGIIADIKTVQIG</sequence>